<proteinExistence type="inferred from homology"/>
<protein>
    <recommendedName>
        <fullName evidence="1">DNA ligase</fullName>
        <ecNumber evidence="1">6.5.1.1</ecNumber>
    </recommendedName>
    <alternativeName>
        <fullName evidence="1">Polydeoxyribonucleotide synthase [ATP]</fullName>
    </alternativeName>
</protein>
<keyword id="KW-0067">ATP-binding</keyword>
<keyword id="KW-0131">Cell cycle</keyword>
<keyword id="KW-0132">Cell division</keyword>
<keyword id="KW-0227">DNA damage</keyword>
<keyword id="KW-0233">DNA recombination</keyword>
<keyword id="KW-0234">DNA repair</keyword>
<keyword id="KW-0235">DNA replication</keyword>
<keyword id="KW-0436">Ligase</keyword>
<keyword id="KW-0460">Magnesium</keyword>
<keyword id="KW-0479">Metal-binding</keyword>
<keyword id="KW-0547">Nucleotide-binding</keyword>
<organism>
    <name type="scientific">Thermoplasma volcanium (strain ATCC 51530 / DSM 4299 / JCM 9571 / NBRC 15438 / GSS1)</name>
    <dbReference type="NCBI Taxonomy" id="273116"/>
    <lineage>
        <taxon>Archaea</taxon>
        <taxon>Methanobacteriati</taxon>
        <taxon>Thermoplasmatota</taxon>
        <taxon>Thermoplasmata</taxon>
        <taxon>Thermoplasmatales</taxon>
        <taxon>Thermoplasmataceae</taxon>
        <taxon>Thermoplasma</taxon>
    </lineage>
</organism>
<sequence length="588" mass="66218">MKFSLVTDAFEKMSKTTKRTELTEILVELLKSADEDLQSLVYLIEGKLAPDYQGIETQMSDKLIIKALSIVSNIPEEAVSETYSKLGDIGSVAREIAAKKNMRSLVNEDLTVKYVHDTLMRMAKTSGSGSTKARIDAYVDLALSGTPADLMYITRIITGKLRIGVSDATILDAIILAFSDEKYSEEIENAYNFHPDLGYIAVQLRLGNLESVINMGPTPMVPFKVMLAERLRSVDEIVQKMNGKCAFEYKYDGMRTEIHIVDEKVRLFSRGNEETTGQFPDIVKSAKETFHVSSVILDGEAVPYNPETGELYPFQVISQRRGRKYDLDKVSNEIPITVFLFDIVYINGKDLSKTPYAERRRILEGLFKENDNFKLAKRIVSSDTGTITKFFNQAIEDGCEGLVAKSMADDSYYKAGARGWLWIKLKRDYQAQLWDTIDLTVVGAFMGHGRRSGTYGALLLATYNEKNDTFETVCKLGSGFTDDVLFSLPKRFAEFVSKEKPARVVSTIEPDVWIYPSIVMEIIGAEITISPVHTCAFGIIEKDAGLSIRFPRFTGKWRDDKKPEDSTTTQEIIEMYKEQKKTLTEEKS</sequence>
<reference key="1">
    <citation type="journal article" date="2000" name="Proc. Natl. Acad. Sci. U.S.A.">
        <title>Archaeal adaptation to higher temperatures revealed by genomic sequence of Thermoplasma volcanium.</title>
        <authorList>
            <person name="Kawashima T."/>
            <person name="Amano N."/>
            <person name="Koike H."/>
            <person name="Makino S."/>
            <person name="Higuchi S."/>
            <person name="Kawashima-Ohya Y."/>
            <person name="Watanabe K."/>
            <person name="Yamazaki M."/>
            <person name="Kanehori K."/>
            <person name="Kawamoto T."/>
            <person name="Nunoshiba T."/>
            <person name="Yamamoto Y."/>
            <person name="Aramaki H."/>
            <person name="Makino K."/>
            <person name="Suzuki M."/>
        </authorList>
    </citation>
    <scope>NUCLEOTIDE SEQUENCE [LARGE SCALE GENOMIC DNA]</scope>
    <source>
        <strain>ATCC 51530 / DSM 4299 / JCM 9571 / NBRC 15438 / GSS1</strain>
    </source>
</reference>
<dbReference type="EC" id="6.5.1.1" evidence="1"/>
<dbReference type="EMBL" id="BA000011">
    <property type="protein sequence ID" value="BAB60403.1"/>
    <property type="molecule type" value="Genomic_DNA"/>
</dbReference>
<dbReference type="RefSeq" id="WP_010917495.1">
    <property type="nucleotide sequence ID" value="NC_002689.2"/>
</dbReference>
<dbReference type="SMR" id="Q979A1"/>
<dbReference type="STRING" id="273116.gene:9382066"/>
<dbReference type="PaxDb" id="273116-14325499"/>
<dbReference type="GeneID" id="1441377"/>
<dbReference type="KEGG" id="tvo:TVG1298537"/>
<dbReference type="eggNOG" id="arCOG01347">
    <property type="taxonomic scope" value="Archaea"/>
</dbReference>
<dbReference type="HOGENOM" id="CLU_005138_6_0_2"/>
<dbReference type="OrthoDB" id="31274at2157"/>
<dbReference type="PhylomeDB" id="Q979A1"/>
<dbReference type="Proteomes" id="UP000001017">
    <property type="component" value="Chromosome"/>
</dbReference>
<dbReference type="GO" id="GO:0005524">
    <property type="term" value="F:ATP binding"/>
    <property type="evidence" value="ECO:0007669"/>
    <property type="project" value="UniProtKB-UniRule"/>
</dbReference>
<dbReference type="GO" id="GO:0003677">
    <property type="term" value="F:DNA binding"/>
    <property type="evidence" value="ECO:0007669"/>
    <property type="project" value="InterPro"/>
</dbReference>
<dbReference type="GO" id="GO:0003910">
    <property type="term" value="F:DNA ligase (ATP) activity"/>
    <property type="evidence" value="ECO:0007669"/>
    <property type="project" value="UniProtKB-UniRule"/>
</dbReference>
<dbReference type="GO" id="GO:0046872">
    <property type="term" value="F:metal ion binding"/>
    <property type="evidence" value="ECO:0007669"/>
    <property type="project" value="UniProtKB-KW"/>
</dbReference>
<dbReference type="GO" id="GO:0051301">
    <property type="term" value="P:cell division"/>
    <property type="evidence" value="ECO:0007669"/>
    <property type="project" value="UniProtKB-KW"/>
</dbReference>
<dbReference type="GO" id="GO:0071897">
    <property type="term" value="P:DNA biosynthetic process"/>
    <property type="evidence" value="ECO:0007669"/>
    <property type="project" value="InterPro"/>
</dbReference>
<dbReference type="GO" id="GO:0006310">
    <property type="term" value="P:DNA recombination"/>
    <property type="evidence" value="ECO:0007669"/>
    <property type="project" value="UniProtKB-UniRule"/>
</dbReference>
<dbReference type="GO" id="GO:0006281">
    <property type="term" value="P:DNA repair"/>
    <property type="evidence" value="ECO:0007669"/>
    <property type="project" value="UniProtKB-UniRule"/>
</dbReference>
<dbReference type="GO" id="GO:0006273">
    <property type="term" value="P:lagging strand elongation"/>
    <property type="evidence" value="ECO:0007669"/>
    <property type="project" value="TreeGrafter"/>
</dbReference>
<dbReference type="CDD" id="cd07901">
    <property type="entry name" value="Adenylation_DNA_ligase_Arch_LigB"/>
    <property type="match status" value="1"/>
</dbReference>
<dbReference type="CDD" id="cd07969">
    <property type="entry name" value="OBF_DNA_ligase_I"/>
    <property type="match status" value="1"/>
</dbReference>
<dbReference type="FunFam" id="1.10.3260.10:FF:000007">
    <property type="entry name" value="DNA ligase"/>
    <property type="match status" value="1"/>
</dbReference>
<dbReference type="FunFam" id="2.40.50.140:FF:000062">
    <property type="entry name" value="DNA ligase"/>
    <property type="match status" value="1"/>
</dbReference>
<dbReference type="Gene3D" id="1.10.3260.10">
    <property type="entry name" value="DNA ligase, ATP-dependent, N-terminal domain"/>
    <property type="match status" value="1"/>
</dbReference>
<dbReference type="Gene3D" id="3.30.470.30">
    <property type="entry name" value="DNA ligase/mRNA capping enzyme"/>
    <property type="match status" value="1"/>
</dbReference>
<dbReference type="Gene3D" id="2.40.50.140">
    <property type="entry name" value="Nucleic acid-binding proteins"/>
    <property type="match status" value="1"/>
</dbReference>
<dbReference type="HAMAP" id="MF_00407">
    <property type="entry name" value="DNA_ligase"/>
    <property type="match status" value="1"/>
</dbReference>
<dbReference type="InterPro" id="IPR050191">
    <property type="entry name" value="ATP-dep_DNA_ligase"/>
</dbReference>
<dbReference type="InterPro" id="IPR022865">
    <property type="entry name" value="DNA_ligae_ATP-dep_bac/arc"/>
</dbReference>
<dbReference type="InterPro" id="IPR000977">
    <property type="entry name" value="DNA_ligase_ATP-dep"/>
</dbReference>
<dbReference type="InterPro" id="IPR012309">
    <property type="entry name" value="DNA_ligase_ATP-dep_C"/>
</dbReference>
<dbReference type="InterPro" id="IPR012310">
    <property type="entry name" value="DNA_ligase_ATP-dep_cent"/>
</dbReference>
<dbReference type="InterPro" id="IPR016059">
    <property type="entry name" value="DNA_ligase_ATP-dep_CS"/>
</dbReference>
<dbReference type="InterPro" id="IPR012308">
    <property type="entry name" value="DNA_ligase_ATP-dep_N"/>
</dbReference>
<dbReference type="InterPro" id="IPR036599">
    <property type="entry name" value="DNA_ligase_N_sf"/>
</dbReference>
<dbReference type="InterPro" id="IPR012340">
    <property type="entry name" value="NA-bd_OB-fold"/>
</dbReference>
<dbReference type="NCBIfam" id="TIGR00574">
    <property type="entry name" value="dnl1"/>
    <property type="match status" value="1"/>
</dbReference>
<dbReference type="PANTHER" id="PTHR45674:SF4">
    <property type="entry name" value="DNA LIGASE 1"/>
    <property type="match status" value="1"/>
</dbReference>
<dbReference type="PANTHER" id="PTHR45674">
    <property type="entry name" value="DNA LIGASE 1/3 FAMILY MEMBER"/>
    <property type="match status" value="1"/>
</dbReference>
<dbReference type="Pfam" id="PF04679">
    <property type="entry name" value="DNA_ligase_A_C"/>
    <property type="match status" value="1"/>
</dbReference>
<dbReference type="Pfam" id="PF01068">
    <property type="entry name" value="DNA_ligase_A_M"/>
    <property type="match status" value="1"/>
</dbReference>
<dbReference type="Pfam" id="PF04675">
    <property type="entry name" value="DNA_ligase_A_N"/>
    <property type="match status" value="1"/>
</dbReference>
<dbReference type="SUPFAM" id="SSF117018">
    <property type="entry name" value="ATP-dependent DNA ligase DNA-binding domain"/>
    <property type="match status" value="1"/>
</dbReference>
<dbReference type="SUPFAM" id="SSF56091">
    <property type="entry name" value="DNA ligase/mRNA capping enzyme, catalytic domain"/>
    <property type="match status" value="1"/>
</dbReference>
<dbReference type="SUPFAM" id="SSF50249">
    <property type="entry name" value="Nucleic acid-binding proteins"/>
    <property type="match status" value="1"/>
</dbReference>
<dbReference type="PROSITE" id="PS00333">
    <property type="entry name" value="DNA_LIGASE_A2"/>
    <property type="match status" value="1"/>
</dbReference>
<dbReference type="PROSITE" id="PS50160">
    <property type="entry name" value="DNA_LIGASE_A3"/>
    <property type="match status" value="1"/>
</dbReference>
<name>DNLI_THEVO</name>
<accession>Q979A1</accession>
<evidence type="ECO:0000255" key="1">
    <source>
        <dbReference type="HAMAP-Rule" id="MF_00407"/>
    </source>
</evidence>
<gene>
    <name evidence="1" type="primary">lig</name>
    <name type="ordered locus">TV1261</name>
    <name type="ORF">TVG1298537</name>
</gene>
<comment type="function">
    <text evidence="1">DNA ligase that seals nicks in double-stranded DNA during DNA replication, DNA recombination and DNA repair.</text>
</comment>
<comment type="catalytic activity">
    <reaction evidence="1">
        <text>ATP + (deoxyribonucleotide)n-3'-hydroxyl + 5'-phospho-(deoxyribonucleotide)m = (deoxyribonucleotide)n+m + AMP + diphosphate.</text>
        <dbReference type="EC" id="6.5.1.1"/>
    </reaction>
</comment>
<comment type="cofactor">
    <cofactor evidence="1">
        <name>Mg(2+)</name>
        <dbReference type="ChEBI" id="CHEBI:18420"/>
    </cofactor>
</comment>
<comment type="similarity">
    <text evidence="1">Belongs to the ATP-dependent DNA ligase family.</text>
</comment>
<feature type="chain" id="PRO_0000059622" description="DNA ligase">
    <location>
        <begin position="1"/>
        <end position="588"/>
    </location>
</feature>
<feature type="active site" description="N6-AMP-lysine intermediate" evidence="1">
    <location>
        <position position="250"/>
    </location>
</feature>
<feature type="binding site" evidence="1">
    <location>
        <position position="248"/>
    </location>
    <ligand>
        <name>ATP</name>
        <dbReference type="ChEBI" id="CHEBI:30616"/>
    </ligand>
</feature>
<feature type="binding site" evidence="1">
    <location>
        <position position="255"/>
    </location>
    <ligand>
        <name>ATP</name>
        <dbReference type="ChEBI" id="CHEBI:30616"/>
    </ligand>
</feature>
<feature type="binding site" evidence="1">
    <location>
        <position position="270"/>
    </location>
    <ligand>
        <name>ATP</name>
        <dbReference type="ChEBI" id="CHEBI:30616"/>
    </ligand>
</feature>
<feature type="binding site" evidence="1">
    <location>
        <position position="300"/>
    </location>
    <ligand>
        <name>ATP</name>
        <dbReference type="ChEBI" id="CHEBI:30616"/>
    </ligand>
</feature>
<feature type="binding site" evidence="1">
    <location>
        <position position="341"/>
    </location>
    <ligand>
        <name>ATP</name>
        <dbReference type="ChEBI" id="CHEBI:30616"/>
    </ligand>
</feature>
<feature type="binding site" evidence="1">
    <location>
        <position position="418"/>
    </location>
    <ligand>
        <name>ATP</name>
        <dbReference type="ChEBI" id="CHEBI:30616"/>
    </ligand>
</feature>
<feature type="binding site" evidence="1">
    <location>
        <position position="424"/>
    </location>
    <ligand>
        <name>ATP</name>
        <dbReference type="ChEBI" id="CHEBI:30616"/>
    </ligand>
</feature>